<sequence length="75" mass="7660">MDIITLAEVAGNLSVIGYGIGTLGPGIGLGILFGKAMESTARQPEMSGKIQTIMFIGLALVEVLALIGFVAALII</sequence>
<protein>
    <recommendedName>
        <fullName evidence="1">ATP synthase subunit c</fullName>
    </recommendedName>
    <alternativeName>
        <fullName evidence="1">ATP synthase F(0) sector subunit c</fullName>
    </alternativeName>
    <alternativeName>
        <fullName evidence="1">F-type ATPase subunit c</fullName>
        <shortName evidence="1">F-ATPase subunit c</shortName>
    </alternativeName>
    <alternativeName>
        <fullName evidence="1">Lipid-binding protein</fullName>
    </alternativeName>
</protein>
<accession>Q8G7A8</accession>
<comment type="function">
    <text evidence="1">F(1)F(0) ATP synthase produces ATP from ADP in the presence of a proton or sodium gradient. F-type ATPases consist of two structural domains, F(1) containing the extramembraneous catalytic core and F(0) containing the membrane proton channel, linked together by a central stalk and a peripheral stalk. During catalysis, ATP synthesis in the catalytic domain of F(1) is coupled via a rotary mechanism of the central stalk subunits to proton translocation.</text>
</comment>
<comment type="function">
    <text evidence="1">Key component of the F(0) channel; it plays a direct role in translocation across the membrane. A homomeric c-ring of between 10-14 subunits forms the central stalk rotor element with the F(1) delta and epsilon subunits.</text>
</comment>
<comment type="subunit">
    <text evidence="1">F-type ATPases have 2 components, F(1) - the catalytic core - and F(0) - the membrane proton channel. F(1) has five subunits: alpha(3), beta(3), gamma(1), delta(1), epsilon(1). F(0) has three main subunits: a(1), b(2) and c(10-14). The alpha and beta chains form an alternating ring which encloses part of the gamma chain. F(1) is attached to F(0) by a central stalk formed by the gamma and epsilon chains, while a peripheral stalk is formed by the delta and b chains.</text>
</comment>
<comment type="subcellular location">
    <subcellularLocation>
        <location evidence="1">Cell membrane</location>
        <topology evidence="1">Multi-pass membrane protein</topology>
    </subcellularLocation>
</comment>
<comment type="similarity">
    <text evidence="1">Belongs to the ATPase C chain family.</text>
</comment>
<dbReference type="EMBL" id="AE014295">
    <property type="protein sequence ID" value="AAN24200.1"/>
    <property type="molecule type" value="Genomic_DNA"/>
</dbReference>
<dbReference type="RefSeq" id="NP_695564.1">
    <property type="nucleotide sequence ID" value="NC_004307.2"/>
</dbReference>
<dbReference type="RefSeq" id="WP_003831420.1">
    <property type="nucleotide sequence ID" value="NC_004307.2"/>
</dbReference>
<dbReference type="SMR" id="Q8G7A8"/>
<dbReference type="STRING" id="206672.BL0362"/>
<dbReference type="EnsemblBacteria" id="AAN24200">
    <property type="protein sequence ID" value="AAN24200"/>
    <property type="gene ID" value="BL0362"/>
</dbReference>
<dbReference type="GeneID" id="69577494"/>
<dbReference type="KEGG" id="blo:BL0362"/>
<dbReference type="PATRIC" id="fig|206672.9.peg.1098"/>
<dbReference type="HOGENOM" id="CLU_148047_5_2_11"/>
<dbReference type="OrthoDB" id="3183855at2"/>
<dbReference type="PhylomeDB" id="Q8G7A8"/>
<dbReference type="PRO" id="PR:Q8G7A8"/>
<dbReference type="Proteomes" id="UP000000439">
    <property type="component" value="Chromosome"/>
</dbReference>
<dbReference type="GO" id="GO:0005886">
    <property type="term" value="C:plasma membrane"/>
    <property type="evidence" value="ECO:0007669"/>
    <property type="project" value="UniProtKB-SubCell"/>
</dbReference>
<dbReference type="GO" id="GO:0045259">
    <property type="term" value="C:proton-transporting ATP synthase complex"/>
    <property type="evidence" value="ECO:0007669"/>
    <property type="project" value="UniProtKB-KW"/>
</dbReference>
<dbReference type="GO" id="GO:0033177">
    <property type="term" value="C:proton-transporting two-sector ATPase complex, proton-transporting domain"/>
    <property type="evidence" value="ECO:0007669"/>
    <property type="project" value="InterPro"/>
</dbReference>
<dbReference type="GO" id="GO:0008289">
    <property type="term" value="F:lipid binding"/>
    <property type="evidence" value="ECO:0007669"/>
    <property type="project" value="UniProtKB-KW"/>
</dbReference>
<dbReference type="GO" id="GO:0046933">
    <property type="term" value="F:proton-transporting ATP synthase activity, rotational mechanism"/>
    <property type="evidence" value="ECO:0007669"/>
    <property type="project" value="UniProtKB-UniRule"/>
</dbReference>
<dbReference type="CDD" id="cd18121">
    <property type="entry name" value="ATP-synt_Fo_c"/>
    <property type="match status" value="1"/>
</dbReference>
<dbReference type="FunFam" id="1.20.20.10:FF:000002">
    <property type="entry name" value="ATP synthase subunit c"/>
    <property type="match status" value="1"/>
</dbReference>
<dbReference type="Gene3D" id="1.20.20.10">
    <property type="entry name" value="F1F0 ATP synthase subunit C"/>
    <property type="match status" value="1"/>
</dbReference>
<dbReference type="HAMAP" id="MF_01396">
    <property type="entry name" value="ATP_synth_c_bact"/>
    <property type="match status" value="1"/>
</dbReference>
<dbReference type="InterPro" id="IPR005953">
    <property type="entry name" value="ATP_synth_csu_bac/chlpt"/>
</dbReference>
<dbReference type="InterPro" id="IPR000454">
    <property type="entry name" value="ATP_synth_F0_csu"/>
</dbReference>
<dbReference type="InterPro" id="IPR020537">
    <property type="entry name" value="ATP_synth_F0_csu_DDCD_BS"/>
</dbReference>
<dbReference type="InterPro" id="IPR038662">
    <property type="entry name" value="ATP_synth_F0_csu_sf"/>
</dbReference>
<dbReference type="InterPro" id="IPR002379">
    <property type="entry name" value="ATPase_proteolipid_c-like_dom"/>
</dbReference>
<dbReference type="InterPro" id="IPR035921">
    <property type="entry name" value="F/V-ATP_Csub_sf"/>
</dbReference>
<dbReference type="NCBIfam" id="TIGR01260">
    <property type="entry name" value="ATP_synt_c"/>
    <property type="match status" value="1"/>
</dbReference>
<dbReference type="Pfam" id="PF00137">
    <property type="entry name" value="ATP-synt_C"/>
    <property type="match status" value="1"/>
</dbReference>
<dbReference type="PRINTS" id="PR00124">
    <property type="entry name" value="ATPASEC"/>
</dbReference>
<dbReference type="SUPFAM" id="SSF81333">
    <property type="entry name" value="F1F0 ATP synthase subunit C"/>
    <property type="match status" value="1"/>
</dbReference>
<dbReference type="PROSITE" id="PS00605">
    <property type="entry name" value="ATPASE_C"/>
    <property type="match status" value="1"/>
</dbReference>
<keyword id="KW-0066">ATP synthesis</keyword>
<keyword id="KW-1003">Cell membrane</keyword>
<keyword id="KW-0138">CF(0)</keyword>
<keyword id="KW-0375">Hydrogen ion transport</keyword>
<keyword id="KW-0406">Ion transport</keyword>
<keyword id="KW-0446">Lipid-binding</keyword>
<keyword id="KW-0472">Membrane</keyword>
<keyword id="KW-1185">Reference proteome</keyword>
<keyword id="KW-0812">Transmembrane</keyword>
<keyword id="KW-1133">Transmembrane helix</keyword>
<keyword id="KW-0813">Transport</keyword>
<gene>
    <name evidence="1" type="primary">atpE</name>
    <name type="ordered locus">BL0362</name>
</gene>
<reference key="1">
    <citation type="journal article" date="2002" name="Proc. Natl. Acad. Sci. U.S.A.">
        <title>The genome sequence of Bifidobacterium longum reflects its adaptation to the human gastrointestinal tract.</title>
        <authorList>
            <person name="Schell M.A."/>
            <person name="Karmirantzou M."/>
            <person name="Snel B."/>
            <person name="Vilanova D."/>
            <person name="Berger B."/>
            <person name="Pessi G."/>
            <person name="Zwahlen M.-C."/>
            <person name="Desiere F."/>
            <person name="Bork P."/>
            <person name="Delley M."/>
            <person name="Pridmore R.D."/>
            <person name="Arigoni F."/>
        </authorList>
    </citation>
    <scope>NUCLEOTIDE SEQUENCE [LARGE SCALE GENOMIC DNA]</scope>
    <source>
        <strain>NCC 2705</strain>
    </source>
</reference>
<organism>
    <name type="scientific">Bifidobacterium longum (strain NCC 2705)</name>
    <dbReference type="NCBI Taxonomy" id="206672"/>
    <lineage>
        <taxon>Bacteria</taxon>
        <taxon>Bacillati</taxon>
        <taxon>Actinomycetota</taxon>
        <taxon>Actinomycetes</taxon>
        <taxon>Bifidobacteriales</taxon>
        <taxon>Bifidobacteriaceae</taxon>
        <taxon>Bifidobacterium</taxon>
    </lineage>
</organism>
<name>ATPL_BIFLO</name>
<feature type="chain" id="PRO_1000184339" description="ATP synthase subunit c">
    <location>
        <begin position="1"/>
        <end position="75"/>
    </location>
</feature>
<feature type="transmembrane region" description="Helical" evidence="1">
    <location>
        <begin position="13"/>
        <end position="33"/>
    </location>
</feature>
<feature type="transmembrane region" description="Helical" evidence="1">
    <location>
        <begin position="55"/>
        <end position="75"/>
    </location>
</feature>
<feature type="site" description="Reversibly protonated during proton transport" evidence="1">
    <location>
        <position position="62"/>
    </location>
</feature>
<evidence type="ECO:0000255" key="1">
    <source>
        <dbReference type="HAMAP-Rule" id="MF_01396"/>
    </source>
</evidence>
<proteinExistence type="inferred from homology"/>